<organism>
    <name type="scientific">Candida glabrata (strain ATCC 2001 / BCRC 20586 / JCM 3761 / NBRC 0622 / NRRL Y-65 / CBS 138)</name>
    <name type="common">Yeast</name>
    <name type="synonym">Nakaseomyces glabratus</name>
    <dbReference type="NCBI Taxonomy" id="284593"/>
    <lineage>
        <taxon>Eukaryota</taxon>
        <taxon>Fungi</taxon>
        <taxon>Dikarya</taxon>
        <taxon>Ascomycota</taxon>
        <taxon>Saccharomycotina</taxon>
        <taxon>Saccharomycetes</taxon>
        <taxon>Saccharomycetales</taxon>
        <taxon>Saccharomycetaceae</taxon>
        <taxon>Nakaseomyces</taxon>
    </lineage>
</organism>
<gene>
    <name type="primary">COX10</name>
    <name type="ordered locus">CAGL0F03685g</name>
</gene>
<proteinExistence type="inferred from homology"/>
<dbReference type="EC" id="2.5.1.-"/>
<dbReference type="EMBL" id="CR380952">
    <property type="protein sequence ID" value="CAG59054.1"/>
    <property type="molecule type" value="Genomic_DNA"/>
</dbReference>
<dbReference type="RefSeq" id="XP_446130.1">
    <property type="nucleotide sequence ID" value="XM_446130.1"/>
</dbReference>
<dbReference type="SMR" id="Q6FUG4"/>
<dbReference type="FunCoup" id="Q6FUG4">
    <property type="interactions" value="864"/>
</dbReference>
<dbReference type="STRING" id="284593.Q6FUG4"/>
<dbReference type="EnsemblFungi" id="CAGL0F03685g-T">
    <property type="protein sequence ID" value="CAGL0F03685g-T-p1"/>
    <property type="gene ID" value="CAGL0F03685g"/>
</dbReference>
<dbReference type="KEGG" id="cgr:2887706"/>
<dbReference type="CGD" id="CAL0130930">
    <property type="gene designation" value="CAGL0F03685g"/>
</dbReference>
<dbReference type="VEuPathDB" id="FungiDB:B1J91_F03685g"/>
<dbReference type="VEuPathDB" id="FungiDB:CAGL0F03685g"/>
<dbReference type="eggNOG" id="KOG1380">
    <property type="taxonomic scope" value="Eukaryota"/>
</dbReference>
<dbReference type="HOGENOM" id="CLU_029631_2_1_1"/>
<dbReference type="InParanoid" id="Q6FUG4"/>
<dbReference type="OMA" id="MGREPDF"/>
<dbReference type="Proteomes" id="UP000002428">
    <property type="component" value="Chromosome F"/>
</dbReference>
<dbReference type="GO" id="GO:0031966">
    <property type="term" value="C:mitochondrial membrane"/>
    <property type="evidence" value="ECO:0007669"/>
    <property type="project" value="UniProtKB-SubCell"/>
</dbReference>
<dbReference type="GO" id="GO:0008495">
    <property type="term" value="F:protoheme IX farnesyltransferase activity"/>
    <property type="evidence" value="ECO:0007669"/>
    <property type="project" value="InterPro"/>
</dbReference>
<dbReference type="GO" id="GO:0006784">
    <property type="term" value="P:heme A biosynthetic process"/>
    <property type="evidence" value="ECO:0007669"/>
    <property type="project" value="EnsemblFungi"/>
</dbReference>
<dbReference type="CDD" id="cd13957">
    <property type="entry name" value="PT_UbiA_Cox10"/>
    <property type="match status" value="1"/>
</dbReference>
<dbReference type="FunFam" id="1.10.357.140:FF:000004">
    <property type="entry name" value="Protoheme IX farnesyltransferase, mitochondrial"/>
    <property type="match status" value="1"/>
</dbReference>
<dbReference type="Gene3D" id="1.10.357.140">
    <property type="entry name" value="UbiA prenyltransferase"/>
    <property type="match status" value="1"/>
</dbReference>
<dbReference type="InterPro" id="IPR006369">
    <property type="entry name" value="Protohaem_IX_farnesylTrfase"/>
</dbReference>
<dbReference type="InterPro" id="IPR016315">
    <property type="entry name" value="Protohaem_IX_farnesylTrfase_mt"/>
</dbReference>
<dbReference type="InterPro" id="IPR000537">
    <property type="entry name" value="UbiA_prenyltransferase"/>
</dbReference>
<dbReference type="InterPro" id="IPR030470">
    <property type="entry name" value="UbiA_prenylTrfase_CS"/>
</dbReference>
<dbReference type="InterPro" id="IPR044878">
    <property type="entry name" value="UbiA_sf"/>
</dbReference>
<dbReference type="NCBIfam" id="TIGR01473">
    <property type="entry name" value="cyoE_ctaB"/>
    <property type="match status" value="1"/>
</dbReference>
<dbReference type="PANTHER" id="PTHR43448">
    <property type="entry name" value="PROTOHEME IX FARNESYLTRANSFERASE, MITOCHONDRIAL"/>
    <property type="match status" value="1"/>
</dbReference>
<dbReference type="PANTHER" id="PTHR43448:SF2">
    <property type="entry name" value="PROTOHEME IX FARNESYLTRANSFERASE, MITOCHONDRIAL"/>
    <property type="match status" value="1"/>
</dbReference>
<dbReference type="Pfam" id="PF01040">
    <property type="entry name" value="UbiA"/>
    <property type="match status" value="1"/>
</dbReference>
<dbReference type="PIRSF" id="PIRSF001773">
    <property type="entry name" value="COX10"/>
    <property type="match status" value="1"/>
</dbReference>
<dbReference type="PROSITE" id="PS00943">
    <property type="entry name" value="UBIA"/>
    <property type="match status" value="1"/>
</dbReference>
<sequence length="451" mass="50558">MLVRTLYISSSVGSSNMLCNHGLKVIGKYSAIHEATRKIIVRSYSKETIKKHNKQAILNTAPIEFIANNSPLVGISDVNTIKEAAKRTLRCTDDVTDDQTDEIHPHLPFNVKPVDGKARAALKKEKNSMSLDIKKTMEAYVQLTKPRLTILVMLSAICSYALSPYPATVTELLCLTVGTTMCSGAANAINMGREPDYDRQMIRTQARPVVRGAVTPKQAFSFAFGMGTLGTSILYLGVNPTVAALGLSNIALYSWIYTSLKRKHIINTWVGALVGAIPPLMGWAAASPLTHPGSWCLAGLLYAWQFPHFNTLSHNIRNEYKNAGYVMTAWKNPLLNARVALRYSLLMFPLCFGLSYFNITDWYYQIDSGLVNAWLCLWSFKFYMQQRLNYSSKIKNDRVKFNEGLATANVYARKAFFASVLHLPAVLILAILHKKNRWDWLFEDSENPKLK</sequence>
<reference key="1">
    <citation type="journal article" date="2004" name="Nature">
        <title>Genome evolution in yeasts.</title>
        <authorList>
            <person name="Dujon B."/>
            <person name="Sherman D."/>
            <person name="Fischer G."/>
            <person name="Durrens P."/>
            <person name="Casaregola S."/>
            <person name="Lafontaine I."/>
            <person name="de Montigny J."/>
            <person name="Marck C."/>
            <person name="Neuveglise C."/>
            <person name="Talla E."/>
            <person name="Goffard N."/>
            <person name="Frangeul L."/>
            <person name="Aigle M."/>
            <person name="Anthouard V."/>
            <person name="Babour A."/>
            <person name="Barbe V."/>
            <person name="Barnay S."/>
            <person name="Blanchin S."/>
            <person name="Beckerich J.-M."/>
            <person name="Beyne E."/>
            <person name="Bleykasten C."/>
            <person name="Boisrame A."/>
            <person name="Boyer J."/>
            <person name="Cattolico L."/>
            <person name="Confanioleri F."/>
            <person name="de Daruvar A."/>
            <person name="Despons L."/>
            <person name="Fabre E."/>
            <person name="Fairhead C."/>
            <person name="Ferry-Dumazet H."/>
            <person name="Groppi A."/>
            <person name="Hantraye F."/>
            <person name="Hennequin C."/>
            <person name="Jauniaux N."/>
            <person name="Joyet P."/>
            <person name="Kachouri R."/>
            <person name="Kerrest A."/>
            <person name="Koszul R."/>
            <person name="Lemaire M."/>
            <person name="Lesur I."/>
            <person name="Ma L."/>
            <person name="Muller H."/>
            <person name="Nicaud J.-M."/>
            <person name="Nikolski M."/>
            <person name="Oztas S."/>
            <person name="Ozier-Kalogeropoulos O."/>
            <person name="Pellenz S."/>
            <person name="Potier S."/>
            <person name="Richard G.-F."/>
            <person name="Straub M.-L."/>
            <person name="Suleau A."/>
            <person name="Swennen D."/>
            <person name="Tekaia F."/>
            <person name="Wesolowski-Louvel M."/>
            <person name="Westhof E."/>
            <person name="Wirth B."/>
            <person name="Zeniou-Meyer M."/>
            <person name="Zivanovic Y."/>
            <person name="Bolotin-Fukuhara M."/>
            <person name="Thierry A."/>
            <person name="Bouchier C."/>
            <person name="Caudron B."/>
            <person name="Scarpelli C."/>
            <person name="Gaillardin C."/>
            <person name="Weissenbach J."/>
            <person name="Wincker P."/>
            <person name="Souciet J.-L."/>
        </authorList>
    </citation>
    <scope>NUCLEOTIDE SEQUENCE [LARGE SCALE GENOMIC DNA]</scope>
    <source>
        <strain>ATCC 2001 / BCRC 20586 / JCM 3761 / NBRC 0622 / NRRL Y-65 / CBS 138</strain>
    </source>
</reference>
<evidence type="ECO:0000250" key="1"/>
<evidence type="ECO:0000255" key="2"/>
<evidence type="ECO:0000305" key="3"/>
<feature type="transit peptide" description="Mitochondrion" evidence="2">
    <location>
        <begin position="1"/>
        <end status="unknown"/>
    </location>
</feature>
<feature type="chain" id="PRO_0000045413" description="Protoheme IX farnesyltransferase, mitochondrial">
    <location>
        <begin status="unknown"/>
        <end position="451"/>
    </location>
</feature>
<feature type="transmembrane region" description="Helical" evidence="2">
    <location>
        <begin position="149"/>
        <end position="169"/>
    </location>
</feature>
<feature type="transmembrane region" description="Helical" evidence="2">
    <location>
        <begin position="240"/>
        <end position="260"/>
    </location>
</feature>
<feature type="transmembrane region" description="Helical" evidence="2">
    <location>
        <begin position="265"/>
        <end position="285"/>
    </location>
</feature>
<feature type="transmembrane region" description="Helical" evidence="2">
    <location>
        <begin position="289"/>
        <end position="309"/>
    </location>
</feature>
<feature type="transmembrane region" description="Helical" evidence="2">
    <location>
        <begin position="339"/>
        <end position="359"/>
    </location>
</feature>
<feature type="transmembrane region" description="Helical" evidence="2">
    <location>
        <begin position="414"/>
        <end position="434"/>
    </location>
</feature>
<keyword id="KW-0350">Heme biosynthesis</keyword>
<keyword id="KW-0472">Membrane</keyword>
<keyword id="KW-0496">Mitochondrion</keyword>
<keyword id="KW-1185">Reference proteome</keyword>
<keyword id="KW-0808">Transferase</keyword>
<keyword id="KW-0809">Transit peptide</keyword>
<keyword id="KW-0812">Transmembrane</keyword>
<keyword id="KW-1133">Transmembrane helix</keyword>
<name>COX10_CANGA</name>
<protein>
    <recommendedName>
        <fullName>Protoheme IX farnesyltransferase, mitochondrial</fullName>
        <ecNumber>2.5.1.-</ecNumber>
    </recommendedName>
    <alternativeName>
        <fullName>Heme O synthase</fullName>
    </alternativeName>
</protein>
<comment type="function">
    <text evidence="1">Converts protoheme IX and farnesyl diphosphate to heme O.</text>
</comment>
<comment type="subcellular location">
    <subcellularLocation>
        <location evidence="1">Mitochondrion membrane</location>
        <topology evidence="1">Multi-pass membrane protein</topology>
    </subcellularLocation>
</comment>
<comment type="similarity">
    <text evidence="3">Belongs to the UbiA prenyltransferase family.</text>
</comment>
<accession>Q6FUG4</accession>